<protein>
    <recommendedName>
        <fullName>Ubiquitin carboxyl-terminal hydrolase 1</fullName>
        <ecNumber evidence="1">3.4.19.12</ecNumber>
    </recommendedName>
    <alternativeName>
        <fullName>Deubiquitinating enzyme 1</fullName>
    </alternativeName>
    <alternativeName>
        <fullName>Ubiquitin thioesterase 1</fullName>
    </alternativeName>
    <alternativeName>
        <fullName>Ubiquitin-specific-processing protease 1</fullName>
    </alternativeName>
    <component>
        <recommendedName>
            <fullName evidence="1">Ubiquitin carboxyl-terminal hydrolase 1, N-terminal fragment</fullName>
        </recommendedName>
    </component>
</protein>
<comment type="function">
    <text evidence="1">Negative regulator of DNA damage repair which specifically deubiquitinates monoubiquitinated FANCD2. Also involved in PCNA-mediated translesion synthesis (TLS) by deubiquitinating monoubiquitinated PCNA. Has almost no deubiquitinating activity by itself and requires the interaction with WDR48 to have a high activity.</text>
</comment>
<comment type="catalytic activity">
    <reaction evidence="1">
        <text>Thiol-dependent hydrolysis of ester, thioester, amide, peptide and isopeptide bonds formed by the C-terminal Gly of ubiquitin (a 76-residue protein attached to proteins as an intracellular targeting signal).</text>
        <dbReference type="EC" id="3.4.19.12"/>
    </reaction>
</comment>
<comment type="subunit">
    <text evidence="1">Interacts with FANCD2 and PCNA. Interacts with WDR48. Interacts with ATAD5; the interaction regulates USP1-mediated PCNA deubiquitination.</text>
</comment>
<comment type="subcellular location">
    <subcellularLocation>
        <location evidence="1">Nucleus</location>
    </subcellularLocation>
</comment>
<comment type="PTM">
    <text evidence="1">Autocatalytic cleavage of USP1 following UV irradiation inactivates it, leading to an increase in ubiquitinated PCNA, recruitment of POLH and translesion synthesis.</text>
</comment>
<comment type="PTM">
    <molecule>Ubiquitin carboxyl-terminal hydrolase 1, N-terminal fragment</molecule>
    <text evidence="1">Ubiquitinated by the CRL2(KLHDC2) complex following autocatalytic cleavage, leading to its degradation: the CRL2(KLHDC2) complex recognizes the diglycine (Gly-Gly) at the C-terminus.</text>
</comment>
<comment type="similarity">
    <text evidence="3">Belongs to the peptidase C19 family.</text>
</comment>
<evidence type="ECO:0000250" key="1">
    <source>
        <dbReference type="UniProtKB" id="O94782"/>
    </source>
</evidence>
<evidence type="ECO:0000250" key="2">
    <source>
        <dbReference type="UniProtKB" id="Q8BJQ2"/>
    </source>
</evidence>
<evidence type="ECO:0000255" key="3"/>
<evidence type="ECO:0000255" key="4">
    <source>
        <dbReference type="PROSITE-ProRule" id="PRU10092"/>
    </source>
</evidence>
<evidence type="ECO:0000255" key="5">
    <source>
        <dbReference type="PROSITE-ProRule" id="PRU10093"/>
    </source>
</evidence>
<evidence type="ECO:0000256" key="6">
    <source>
        <dbReference type="SAM" id="MobiDB-lite"/>
    </source>
</evidence>
<evidence type="ECO:0000312" key="7">
    <source>
        <dbReference type="EMBL" id="AAI14088.1"/>
    </source>
</evidence>
<accession>Q29RP1</accession>
<feature type="chain" id="PRO_0000306286" description="Ubiquitin carboxyl-terminal hydrolase 1">
    <location>
        <begin position="1"/>
        <end position="783"/>
    </location>
</feature>
<feature type="chain" id="PRO_0000453161" description="Ubiquitin carboxyl-terminal hydrolase 1, N-terminal fragment" evidence="1">
    <location>
        <begin position="1"/>
        <end position="669"/>
    </location>
</feature>
<feature type="domain" description="USP">
    <location>
        <begin position="81"/>
        <end position="783"/>
    </location>
</feature>
<feature type="region of interest" description="Disordered" evidence="6">
    <location>
        <begin position="1"/>
        <end position="22"/>
    </location>
</feature>
<feature type="region of interest" description="Disordered" evidence="6">
    <location>
        <begin position="34"/>
        <end position="55"/>
    </location>
</feature>
<feature type="region of interest" description="Disordered" evidence="6">
    <location>
        <begin position="234"/>
        <end position="311"/>
    </location>
</feature>
<feature type="region of interest" description="Disordered" evidence="6">
    <location>
        <begin position="685"/>
        <end position="722"/>
    </location>
</feature>
<feature type="compositionally biased region" description="Polar residues" evidence="6">
    <location>
        <begin position="7"/>
        <end position="16"/>
    </location>
</feature>
<feature type="compositionally biased region" description="Basic and acidic residues" evidence="6">
    <location>
        <begin position="45"/>
        <end position="55"/>
    </location>
</feature>
<feature type="compositionally biased region" description="Basic and acidic residues" evidence="6">
    <location>
        <begin position="250"/>
        <end position="273"/>
    </location>
</feature>
<feature type="compositionally biased region" description="Basic and acidic residues" evidence="6">
    <location>
        <begin position="284"/>
        <end position="296"/>
    </location>
</feature>
<feature type="active site" description="Nucleophile" evidence="4 5">
    <location>
        <position position="90"/>
    </location>
</feature>
<feature type="active site" description="Proton acceptor" evidence="4 5">
    <location>
        <position position="591"/>
    </location>
</feature>
<feature type="site" description="Cleavage; by autolysis" evidence="1">
    <location>
        <begin position="669"/>
        <end position="670"/>
    </location>
</feature>
<feature type="modified residue" description="Phosphoserine" evidence="1">
    <location>
        <position position="16"/>
    </location>
</feature>
<feature type="modified residue" description="Phosphoserine" evidence="1">
    <location>
        <position position="42"/>
    </location>
</feature>
<feature type="modified residue" description="Phosphoserine" evidence="1">
    <location>
        <position position="67"/>
    </location>
</feature>
<feature type="modified residue" description="Phosphoserine" evidence="1">
    <location>
        <position position="473"/>
    </location>
</feature>
<feature type="modified residue" description="Phosphoserine" evidence="2">
    <location>
        <position position="766"/>
    </location>
</feature>
<sequence>MPGVIPSESNGLSRGSPSKKNRLSLKFFQKKETKRALDFTDSQENEEKTSEYKGSEIDQVVPAAQSSPINCEKRENLLPFVGLNNLGNTCYLNSILQVLYFCPGFKSGVKHLFNIISRKKEALKDEANQKDKGNCKEDSLASYELICSLQSLIISVEQLQASFLLNPEKYTDELATQPRRLLNTLRELNPMYEGYLQHDAQEVLQCILGNIQETCQLLKKEEVKNVEDLSTKVEEYQKEEMSDNNSMEMDNMRHSEDYKEKLSKGNGKRKSDAEFGNMKKKVKISKEHQSSEENQRQTRSKRKAAGDTLEISHKIIPKHISENESTRPSQRKSKVKINWLKSAAKQPSILSKFCSMGKIATNQGSKGHCKENEYDLEEDLGKYENDNTTNDCELESPGNNDMPVHVNEVKPINKGAEQIGFELVEKLFQGQLVLRTRCLECESLTERREDFQDISVPVQEDELSKVEENSEISPEPKTEMKTLRWAISQFASVERIVGEDKYFCENCHHYTEAERSLLFDKMPEVITIHLKCFAASGLEFDCYGGGLSKINTPLLTPLKLSLEEWSTKPTNDSYGLFAVVMHSGITISSGHYTASVKVTDLNSLELDKENFVIDQTCEIGKPEPLNEEEVRGVVENYDNEEVSIRVSGNNQPSKVLNKKNVEAIGLLGGQKSKADYELYNKASNPDKVASTALPENRNSETNNTNGTDESDSNKESSDQTGINISGFENKISYVVQSLKEYEGKWLLFDDSEVKVTEEKDFLNSLSPSTSPTSTPYLLFYKKL</sequence>
<proteinExistence type="evidence at transcript level"/>
<name>UBP1_BOVIN</name>
<dbReference type="EC" id="3.4.19.12" evidence="1"/>
<dbReference type="EMBL" id="BC114087">
    <property type="protein sequence ID" value="AAI14088.1"/>
    <property type="molecule type" value="mRNA"/>
</dbReference>
<dbReference type="RefSeq" id="NP_001039689.1">
    <property type="nucleotide sequence ID" value="NM_001046224.1"/>
</dbReference>
<dbReference type="SMR" id="Q29RP1"/>
<dbReference type="FunCoup" id="Q29RP1">
    <property type="interactions" value="3823"/>
</dbReference>
<dbReference type="STRING" id="9913.ENSBTAP00000027254"/>
<dbReference type="MEROPS" id="C19.019"/>
<dbReference type="PaxDb" id="9913-ENSBTAP00000027254"/>
<dbReference type="GeneID" id="516328"/>
<dbReference type="KEGG" id="bta:516328"/>
<dbReference type="CTD" id="7398"/>
<dbReference type="eggNOG" id="KOG1864">
    <property type="taxonomic scope" value="Eukaryota"/>
</dbReference>
<dbReference type="InParanoid" id="Q29RP1"/>
<dbReference type="OrthoDB" id="10062454at2759"/>
<dbReference type="Proteomes" id="UP000009136">
    <property type="component" value="Unplaced"/>
</dbReference>
<dbReference type="GO" id="GO:0005829">
    <property type="term" value="C:cytosol"/>
    <property type="evidence" value="ECO:0000318"/>
    <property type="project" value="GO_Central"/>
</dbReference>
<dbReference type="GO" id="GO:0005634">
    <property type="term" value="C:nucleus"/>
    <property type="evidence" value="ECO:0000250"/>
    <property type="project" value="UniProtKB"/>
</dbReference>
<dbReference type="GO" id="GO:0004843">
    <property type="term" value="F:cysteine-type deubiquitinase activity"/>
    <property type="evidence" value="ECO:0000250"/>
    <property type="project" value="UniProtKB"/>
</dbReference>
<dbReference type="GO" id="GO:0004197">
    <property type="term" value="F:cysteine-type endopeptidase activity"/>
    <property type="evidence" value="ECO:0007669"/>
    <property type="project" value="InterPro"/>
</dbReference>
<dbReference type="GO" id="GO:0006281">
    <property type="term" value="P:DNA repair"/>
    <property type="evidence" value="ECO:0007669"/>
    <property type="project" value="UniProtKB-KW"/>
</dbReference>
<dbReference type="GO" id="GO:0035520">
    <property type="term" value="P:monoubiquitinated protein deubiquitination"/>
    <property type="evidence" value="ECO:0000250"/>
    <property type="project" value="UniProtKB"/>
</dbReference>
<dbReference type="GO" id="GO:0016579">
    <property type="term" value="P:protein deubiquitination"/>
    <property type="evidence" value="ECO:0000250"/>
    <property type="project" value="UniProtKB"/>
</dbReference>
<dbReference type="GO" id="GO:0006508">
    <property type="term" value="P:proteolysis"/>
    <property type="evidence" value="ECO:0007669"/>
    <property type="project" value="UniProtKB-KW"/>
</dbReference>
<dbReference type="GO" id="GO:0006282">
    <property type="term" value="P:regulation of DNA repair"/>
    <property type="evidence" value="ECO:0000250"/>
    <property type="project" value="UniProtKB"/>
</dbReference>
<dbReference type="GO" id="GO:0031647">
    <property type="term" value="P:regulation of protein stability"/>
    <property type="evidence" value="ECO:0000318"/>
    <property type="project" value="GO_Central"/>
</dbReference>
<dbReference type="GO" id="GO:0009411">
    <property type="term" value="P:response to UV"/>
    <property type="evidence" value="ECO:0000250"/>
    <property type="project" value="UniProtKB"/>
</dbReference>
<dbReference type="CDD" id="cd02671">
    <property type="entry name" value="Peptidase_C19O"/>
    <property type="match status" value="1"/>
</dbReference>
<dbReference type="FunFam" id="3.90.70.10:FF:000053">
    <property type="entry name" value="Ubiquitin carboxyl-terminal hydrolase 1"/>
    <property type="match status" value="1"/>
</dbReference>
<dbReference type="FunFam" id="3.90.70.10:FF:000077">
    <property type="entry name" value="Ubiquitin carboxyl-terminal hydrolase 1"/>
    <property type="match status" value="1"/>
</dbReference>
<dbReference type="Gene3D" id="3.90.70.10">
    <property type="entry name" value="Cysteine proteinases"/>
    <property type="match status" value="2"/>
</dbReference>
<dbReference type="InterPro" id="IPR038765">
    <property type="entry name" value="Papain-like_cys_pep_sf"/>
</dbReference>
<dbReference type="InterPro" id="IPR050164">
    <property type="entry name" value="Peptidase_C19"/>
</dbReference>
<dbReference type="InterPro" id="IPR001394">
    <property type="entry name" value="Peptidase_C19_UCH"/>
</dbReference>
<dbReference type="InterPro" id="IPR033815">
    <property type="entry name" value="USP1"/>
</dbReference>
<dbReference type="InterPro" id="IPR018200">
    <property type="entry name" value="USP_CS"/>
</dbReference>
<dbReference type="InterPro" id="IPR028889">
    <property type="entry name" value="USP_dom"/>
</dbReference>
<dbReference type="PANTHER" id="PTHR24006">
    <property type="entry name" value="UBIQUITIN CARBOXYL-TERMINAL HYDROLASE"/>
    <property type="match status" value="1"/>
</dbReference>
<dbReference type="PANTHER" id="PTHR24006:SF905">
    <property type="entry name" value="UBIQUITIN CARBOXYL-TERMINAL HYDROLASE 1"/>
    <property type="match status" value="1"/>
</dbReference>
<dbReference type="Pfam" id="PF00443">
    <property type="entry name" value="UCH"/>
    <property type="match status" value="1"/>
</dbReference>
<dbReference type="SUPFAM" id="SSF54001">
    <property type="entry name" value="Cysteine proteinases"/>
    <property type="match status" value="1"/>
</dbReference>
<dbReference type="PROSITE" id="PS00972">
    <property type="entry name" value="USP_1"/>
    <property type="match status" value="1"/>
</dbReference>
<dbReference type="PROSITE" id="PS00973">
    <property type="entry name" value="USP_2"/>
    <property type="match status" value="1"/>
</dbReference>
<dbReference type="PROSITE" id="PS50235">
    <property type="entry name" value="USP_3"/>
    <property type="match status" value="1"/>
</dbReference>
<reference evidence="7" key="1">
    <citation type="submission" date="2006-02" db="EMBL/GenBank/DDBJ databases">
        <authorList>
            <consortium name="NIH - Mammalian Gene Collection (MGC) project"/>
        </authorList>
    </citation>
    <scope>NUCLEOTIDE SEQUENCE [LARGE SCALE MRNA]</scope>
    <source>
        <strain evidence="7">Hereford</strain>
        <tissue evidence="7">Heart ventricle</tissue>
    </source>
</reference>
<keyword id="KW-0068">Autocatalytic cleavage</keyword>
<keyword id="KW-0227">DNA damage</keyword>
<keyword id="KW-0234">DNA repair</keyword>
<keyword id="KW-0378">Hydrolase</keyword>
<keyword id="KW-0539">Nucleus</keyword>
<keyword id="KW-0597">Phosphoprotein</keyword>
<keyword id="KW-0645">Protease</keyword>
<keyword id="KW-1185">Reference proteome</keyword>
<keyword id="KW-0788">Thiol protease</keyword>
<keyword id="KW-0832">Ubl conjugation</keyword>
<keyword id="KW-0833">Ubl conjugation pathway</keyword>
<gene>
    <name evidence="1" type="primary">USP1</name>
</gene>
<organism>
    <name type="scientific">Bos taurus</name>
    <name type="common">Bovine</name>
    <dbReference type="NCBI Taxonomy" id="9913"/>
    <lineage>
        <taxon>Eukaryota</taxon>
        <taxon>Metazoa</taxon>
        <taxon>Chordata</taxon>
        <taxon>Craniata</taxon>
        <taxon>Vertebrata</taxon>
        <taxon>Euteleostomi</taxon>
        <taxon>Mammalia</taxon>
        <taxon>Eutheria</taxon>
        <taxon>Laurasiatheria</taxon>
        <taxon>Artiodactyla</taxon>
        <taxon>Ruminantia</taxon>
        <taxon>Pecora</taxon>
        <taxon>Bovidae</taxon>
        <taxon>Bovinae</taxon>
        <taxon>Bos</taxon>
    </lineage>
</organism>